<sequence length="199" mass="21438">MAEPTLASGWYPRLVVGLGNPGKNYGRTRHNVGFMVANLLAVRLGSKFEVHKRSGADVVNGRLAGCSMLVAKPRNYMNESGQQVGLLAKLYSVTPADIIIVHDDLDLDFGRIRLKLGGGEGGHNGLRSVAAALGTKDFQRVRIGIGRPTGRKDPASFVLENFTTAERMQVPTICKRAADATELLVGLGLEPAQNHVHAW</sequence>
<proteinExistence type="inferred from homology"/>
<organism>
    <name type="scientific">Mycobacterium leprae (strain TN)</name>
    <dbReference type="NCBI Taxonomy" id="272631"/>
    <lineage>
        <taxon>Bacteria</taxon>
        <taxon>Bacillati</taxon>
        <taxon>Actinomycetota</taxon>
        <taxon>Actinomycetes</taxon>
        <taxon>Mycobacteriales</taxon>
        <taxon>Mycobacteriaceae</taxon>
        <taxon>Mycobacterium</taxon>
    </lineage>
</organism>
<reference key="1">
    <citation type="journal article" date="2001" name="Nature">
        <title>Massive gene decay in the leprosy bacillus.</title>
        <authorList>
            <person name="Cole S.T."/>
            <person name="Eiglmeier K."/>
            <person name="Parkhill J."/>
            <person name="James K.D."/>
            <person name="Thomson N.R."/>
            <person name="Wheeler P.R."/>
            <person name="Honore N."/>
            <person name="Garnier T."/>
            <person name="Churcher C.M."/>
            <person name="Harris D.E."/>
            <person name="Mungall K.L."/>
            <person name="Basham D."/>
            <person name="Brown D."/>
            <person name="Chillingworth T."/>
            <person name="Connor R."/>
            <person name="Davies R.M."/>
            <person name="Devlin K."/>
            <person name="Duthoy S."/>
            <person name="Feltwell T."/>
            <person name="Fraser A."/>
            <person name="Hamlin N."/>
            <person name="Holroyd S."/>
            <person name="Hornsby T."/>
            <person name="Jagels K."/>
            <person name="Lacroix C."/>
            <person name="Maclean J."/>
            <person name="Moule S."/>
            <person name="Murphy L.D."/>
            <person name="Oliver K."/>
            <person name="Quail M.A."/>
            <person name="Rajandream M.A."/>
            <person name="Rutherford K.M."/>
            <person name="Rutter S."/>
            <person name="Seeger K."/>
            <person name="Simon S."/>
            <person name="Simmonds M."/>
            <person name="Skelton J."/>
            <person name="Squares R."/>
            <person name="Squares S."/>
            <person name="Stevens K."/>
            <person name="Taylor K."/>
            <person name="Whitehead S."/>
            <person name="Woodward J.R."/>
            <person name="Barrell B.G."/>
        </authorList>
    </citation>
    <scope>NUCLEOTIDE SEQUENCE [LARGE SCALE GENOMIC DNA]</scope>
    <source>
        <strain>TN</strain>
    </source>
</reference>
<keyword id="KW-0963">Cytoplasm</keyword>
<keyword id="KW-0378">Hydrolase</keyword>
<keyword id="KW-1185">Reference proteome</keyword>
<keyword id="KW-0694">RNA-binding</keyword>
<keyword id="KW-0820">tRNA-binding</keyword>
<accession>Q9CD49</accession>
<name>PTH_MYCLE</name>
<feature type="chain" id="PRO_0000187779" description="Peptidyl-tRNA hydrolase">
    <location>
        <begin position="1"/>
        <end position="199"/>
    </location>
</feature>
<feature type="active site" description="Proton acceptor" evidence="1">
    <location>
        <position position="30"/>
    </location>
</feature>
<feature type="binding site" evidence="1">
    <location>
        <position position="25"/>
    </location>
    <ligand>
        <name>tRNA</name>
        <dbReference type="ChEBI" id="CHEBI:17843"/>
    </ligand>
</feature>
<feature type="binding site" evidence="1">
    <location>
        <position position="76"/>
    </location>
    <ligand>
        <name>tRNA</name>
        <dbReference type="ChEBI" id="CHEBI:17843"/>
    </ligand>
</feature>
<feature type="binding site" evidence="1">
    <location>
        <position position="78"/>
    </location>
    <ligand>
        <name>tRNA</name>
        <dbReference type="ChEBI" id="CHEBI:17843"/>
    </ligand>
</feature>
<feature type="binding site" evidence="1">
    <location>
        <position position="124"/>
    </location>
    <ligand>
        <name>tRNA</name>
        <dbReference type="ChEBI" id="CHEBI:17843"/>
    </ligand>
</feature>
<feature type="site" description="Discriminates between blocked and unblocked aminoacyl-tRNA" evidence="1">
    <location>
        <position position="20"/>
    </location>
</feature>
<feature type="site" description="Stabilizes the basic form of H active site to accept a proton" evidence="1">
    <location>
        <position position="103"/>
    </location>
</feature>
<dbReference type="EC" id="3.1.1.29" evidence="1"/>
<dbReference type="EMBL" id="AL583917">
    <property type="protein sequence ID" value="CAC29752.1"/>
    <property type="molecule type" value="Genomic_DNA"/>
</dbReference>
<dbReference type="PIR" id="D86939">
    <property type="entry name" value="D86939"/>
</dbReference>
<dbReference type="RefSeq" id="NP_301303.1">
    <property type="nucleotide sequence ID" value="NC_002677.1"/>
</dbReference>
<dbReference type="RefSeq" id="WP_010907627.1">
    <property type="nucleotide sequence ID" value="NC_002677.1"/>
</dbReference>
<dbReference type="SMR" id="Q9CD49"/>
<dbReference type="STRING" id="272631.gene:17574061"/>
<dbReference type="KEGG" id="mle:ML0244"/>
<dbReference type="PATRIC" id="fig|272631.5.peg.378"/>
<dbReference type="Leproma" id="ML0244"/>
<dbReference type="eggNOG" id="COG0193">
    <property type="taxonomic scope" value="Bacteria"/>
</dbReference>
<dbReference type="HOGENOM" id="CLU_062456_2_2_11"/>
<dbReference type="OrthoDB" id="9800507at2"/>
<dbReference type="Proteomes" id="UP000000806">
    <property type="component" value="Chromosome"/>
</dbReference>
<dbReference type="GO" id="GO:0005737">
    <property type="term" value="C:cytoplasm"/>
    <property type="evidence" value="ECO:0007669"/>
    <property type="project" value="UniProtKB-SubCell"/>
</dbReference>
<dbReference type="GO" id="GO:0004045">
    <property type="term" value="F:peptidyl-tRNA hydrolase activity"/>
    <property type="evidence" value="ECO:0007669"/>
    <property type="project" value="UniProtKB-UniRule"/>
</dbReference>
<dbReference type="GO" id="GO:0000049">
    <property type="term" value="F:tRNA binding"/>
    <property type="evidence" value="ECO:0007669"/>
    <property type="project" value="UniProtKB-UniRule"/>
</dbReference>
<dbReference type="GO" id="GO:0006515">
    <property type="term" value="P:protein quality control for misfolded or incompletely synthesized proteins"/>
    <property type="evidence" value="ECO:0007669"/>
    <property type="project" value="UniProtKB-UniRule"/>
</dbReference>
<dbReference type="GO" id="GO:0072344">
    <property type="term" value="P:rescue of stalled ribosome"/>
    <property type="evidence" value="ECO:0007669"/>
    <property type="project" value="UniProtKB-UniRule"/>
</dbReference>
<dbReference type="CDD" id="cd00462">
    <property type="entry name" value="PTH"/>
    <property type="match status" value="1"/>
</dbReference>
<dbReference type="FunFam" id="3.40.50.1470:FF:000001">
    <property type="entry name" value="Peptidyl-tRNA hydrolase"/>
    <property type="match status" value="1"/>
</dbReference>
<dbReference type="Gene3D" id="3.40.50.1470">
    <property type="entry name" value="Peptidyl-tRNA hydrolase"/>
    <property type="match status" value="1"/>
</dbReference>
<dbReference type="HAMAP" id="MF_00083">
    <property type="entry name" value="Pept_tRNA_hydro_bact"/>
    <property type="match status" value="1"/>
</dbReference>
<dbReference type="InterPro" id="IPR001328">
    <property type="entry name" value="Pept_tRNA_hydro"/>
</dbReference>
<dbReference type="InterPro" id="IPR018171">
    <property type="entry name" value="Pept_tRNA_hydro_CS"/>
</dbReference>
<dbReference type="InterPro" id="IPR036416">
    <property type="entry name" value="Pept_tRNA_hydro_sf"/>
</dbReference>
<dbReference type="NCBIfam" id="TIGR00447">
    <property type="entry name" value="pth"/>
    <property type="match status" value="1"/>
</dbReference>
<dbReference type="PANTHER" id="PTHR17224">
    <property type="entry name" value="PEPTIDYL-TRNA HYDROLASE"/>
    <property type="match status" value="1"/>
</dbReference>
<dbReference type="PANTHER" id="PTHR17224:SF1">
    <property type="entry name" value="PEPTIDYL-TRNA HYDROLASE"/>
    <property type="match status" value="1"/>
</dbReference>
<dbReference type="Pfam" id="PF01195">
    <property type="entry name" value="Pept_tRNA_hydro"/>
    <property type="match status" value="1"/>
</dbReference>
<dbReference type="SUPFAM" id="SSF53178">
    <property type="entry name" value="Peptidyl-tRNA hydrolase-like"/>
    <property type="match status" value="1"/>
</dbReference>
<dbReference type="PROSITE" id="PS01195">
    <property type="entry name" value="PEPT_TRNA_HYDROL_1"/>
    <property type="match status" value="1"/>
</dbReference>
<dbReference type="PROSITE" id="PS01196">
    <property type="entry name" value="PEPT_TRNA_HYDROL_2"/>
    <property type="match status" value="1"/>
</dbReference>
<comment type="function">
    <text evidence="1">Hydrolyzes ribosome-free peptidyl-tRNAs (with 1 or more amino acids incorporated), which drop off the ribosome during protein synthesis, or as a result of ribosome stalling.</text>
</comment>
<comment type="function">
    <text evidence="1">Catalyzes the release of premature peptidyl moieties from peptidyl-tRNA molecules trapped in stalled 50S ribosomal subunits, and thus maintains levels of free tRNAs and 50S ribosomes.</text>
</comment>
<comment type="catalytic activity">
    <reaction evidence="1">
        <text>an N-acyl-L-alpha-aminoacyl-tRNA + H2O = an N-acyl-L-amino acid + a tRNA + H(+)</text>
        <dbReference type="Rhea" id="RHEA:54448"/>
        <dbReference type="Rhea" id="RHEA-COMP:10123"/>
        <dbReference type="Rhea" id="RHEA-COMP:13883"/>
        <dbReference type="ChEBI" id="CHEBI:15377"/>
        <dbReference type="ChEBI" id="CHEBI:15378"/>
        <dbReference type="ChEBI" id="CHEBI:59874"/>
        <dbReference type="ChEBI" id="CHEBI:78442"/>
        <dbReference type="ChEBI" id="CHEBI:138191"/>
        <dbReference type="EC" id="3.1.1.29"/>
    </reaction>
</comment>
<comment type="subunit">
    <text evidence="1">Monomer.</text>
</comment>
<comment type="subcellular location">
    <subcellularLocation>
        <location evidence="1">Cytoplasm</location>
    </subcellularLocation>
</comment>
<comment type="similarity">
    <text evidence="1">Belongs to the PTH family.</text>
</comment>
<gene>
    <name evidence="1" type="primary">pth</name>
    <name type="ordered locus">ML0244</name>
</gene>
<protein>
    <recommendedName>
        <fullName evidence="1">Peptidyl-tRNA hydrolase</fullName>
        <shortName evidence="1">Pth</shortName>
        <ecNumber evidence="1">3.1.1.29</ecNumber>
    </recommendedName>
</protein>
<evidence type="ECO:0000255" key="1">
    <source>
        <dbReference type="HAMAP-Rule" id="MF_00083"/>
    </source>
</evidence>